<dbReference type="EMBL" id="CR382132">
    <property type="protein sequence ID" value="CAG78471.1"/>
    <property type="molecule type" value="Genomic_DNA"/>
</dbReference>
<dbReference type="RefSeq" id="XP_505662.1">
    <property type="nucleotide sequence ID" value="XM_505662.1"/>
</dbReference>
<dbReference type="SMR" id="Q6C100"/>
<dbReference type="FunCoup" id="Q6C100">
    <property type="interactions" value="1448"/>
</dbReference>
<dbReference type="STRING" id="284591.Q6C100"/>
<dbReference type="EnsemblFungi" id="CAG78471">
    <property type="protein sequence ID" value="CAG78471"/>
    <property type="gene ID" value="YALI0_F20416g"/>
</dbReference>
<dbReference type="KEGG" id="yli:2907866"/>
<dbReference type="VEuPathDB" id="FungiDB:YALI0_F20416g"/>
<dbReference type="HOGENOM" id="CLU_008891_9_1_1"/>
<dbReference type="InParanoid" id="Q6C100"/>
<dbReference type="OMA" id="HPAANMI"/>
<dbReference type="OrthoDB" id="108535at4891"/>
<dbReference type="Proteomes" id="UP000001300">
    <property type="component" value="Chromosome F"/>
</dbReference>
<dbReference type="GO" id="GO:0005832">
    <property type="term" value="C:chaperonin-containing T-complex"/>
    <property type="evidence" value="ECO:0000318"/>
    <property type="project" value="GO_Central"/>
</dbReference>
<dbReference type="GO" id="GO:0005524">
    <property type="term" value="F:ATP binding"/>
    <property type="evidence" value="ECO:0007669"/>
    <property type="project" value="UniProtKB-KW"/>
</dbReference>
<dbReference type="GO" id="GO:0016887">
    <property type="term" value="F:ATP hydrolysis activity"/>
    <property type="evidence" value="ECO:0007669"/>
    <property type="project" value="InterPro"/>
</dbReference>
<dbReference type="GO" id="GO:0140662">
    <property type="term" value="F:ATP-dependent protein folding chaperone"/>
    <property type="evidence" value="ECO:0007669"/>
    <property type="project" value="InterPro"/>
</dbReference>
<dbReference type="GO" id="GO:0051082">
    <property type="term" value="F:unfolded protein binding"/>
    <property type="evidence" value="ECO:0000318"/>
    <property type="project" value="GO_Central"/>
</dbReference>
<dbReference type="GO" id="GO:0051086">
    <property type="term" value="P:chaperone mediated protein folding independent of cofactor"/>
    <property type="evidence" value="ECO:0007669"/>
    <property type="project" value="UniProtKB-ARBA"/>
</dbReference>
<dbReference type="GO" id="GO:0006457">
    <property type="term" value="P:protein folding"/>
    <property type="evidence" value="ECO:0000318"/>
    <property type="project" value="GO_Central"/>
</dbReference>
<dbReference type="CDD" id="cd03338">
    <property type="entry name" value="TCP1_delta"/>
    <property type="match status" value="1"/>
</dbReference>
<dbReference type="FunFam" id="3.50.7.10:FF:000010">
    <property type="entry name" value="T-complex protein 1 subunit delta"/>
    <property type="match status" value="1"/>
</dbReference>
<dbReference type="Gene3D" id="3.50.7.10">
    <property type="entry name" value="GroEL"/>
    <property type="match status" value="1"/>
</dbReference>
<dbReference type="Gene3D" id="1.10.560.10">
    <property type="entry name" value="GroEL-like equatorial domain"/>
    <property type="match status" value="1"/>
</dbReference>
<dbReference type="Gene3D" id="3.30.260.10">
    <property type="entry name" value="TCP-1-like chaperonin intermediate domain"/>
    <property type="match status" value="1"/>
</dbReference>
<dbReference type="InterPro" id="IPR012717">
    <property type="entry name" value="Chap_CCT_delta"/>
</dbReference>
<dbReference type="InterPro" id="IPR017998">
    <property type="entry name" value="Chaperone_TCP-1"/>
</dbReference>
<dbReference type="InterPro" id="IPR002194">
    <property type="entry name" value="Chaperonin_TCP-1_CS"/>
</dbReference>
<dbReference type="InterPro" id="IPR002423">
    <property type="entry name" value="Cpn60/GroEL/TCP-1"/>
</dbReference>
<dbReference type="InterPro" id="IPR027409">
    <property type="entry name" value="GroEL-like_apical_dom_sf"/>
</dbReference>
<dbReference type="InterPro" id="IPR027413">
    <property type="entry name" value="GROEL-like_equatorial_sf"/>
</dbReference>
<dbReference type="InterPro" id="IPR027410">
    <property type="entry name" value="TCP-1-like_intermed_sf"/>
</dbReference>
<dbReference type="InterPro" id="IPR053374">
    <property type="entry name" value="TCP-1_chaperonin"/>
</dbReference>
<dbReference type="InterPro" id="IPR054827">
    <property type="entry name" value="thermosome_alpha"/>
</dbReference>
<dbReference type="NCBIfam" id="TIGR02342">
    <property type="entry name" value="chap_CCT_delta"/>
    <property type="match status" value="1"/>
</dbReference>
<dbReference type="NCBIfam" id="NF041082">
    <property type="entry name" value="thermosome_alpha"/>
    <property type="match status" value="1"/>
</dbReference>
<dbReference type="NCBIfam" id="NF041083">
    <property type="entry name" value="thermosome_beta"/>
    <property type="match status" value="1"/>
</dbReference>
<dbReference type="PANTHER" id="PTHR11353">
    <property type="entry name" value="CHAPERONIN"/>
    <property type="match status" value="1"/>
</dbReference>
<dbReference type="Pfam" id="PF00118">
    <property type="entry name" value="Cpn60_TCP1"/>
    <property type="match status" value="1"/>
</dbReference>
<dbReference type="PRINTS" id="PR00304">
    <property type="entry name" value="TCOMPLEXTCP1"/>
</dbReference>
<dbReference type="SUPFAM" id="SSF52029">
    <property type="entry name" value="GroEL apical domain-like"/>
    <property type="match status" value="1"/>
</dbReference>
<dbReference type="SUPFAM" id="SSF48592">
    <property type="entry name" value="GroEL equatorial domain-like"/>
    <property type="match status" value="1"/>
</dbReference>
<dbReference type="SUPFAM" id="SSF54849">
    <property type="entry name" value="GroEL-intermediate domain like"/>
    <property type="match status" value="1"/>
</dbReference>
<dbReference type="PROSITE" id="PS00750">
    <property type="entry name" value="TCP1_1"/>
    <property type="match status" value="1"/>
</dbReference>
<dbReference type="PROSITE" id="PS00751">
    <property type="entry name" value="TCP1_2"/>
    <property type="match status" value="1"/>
</dbReference>
<dbReference type="PROSITE" id="PS00995">
    <property type="entry name" value="TCP1_3"/>
    <property type="match status" value="1"/>
</dbReference>
<reference key="1">
    <citation type="journal article" date="2004" name="Nature">
        <title>Genome evolution in yeasts.</title>
        <authorList>
            <person name="Dujon B."/>
            <person name="Sherman D."/>
            <person name="Fischer G."/>
            <person name="Durrens P."/>
            <person name="Casaregola S."/>
            <person name="Lafontaine I."/>
            <person name="de Montigny J."/>
            <person name="Marck C."/>
            <person name="Neuveglise C."/>
            <person name="Talla E."/>
            <person name="Goffard N."/>
            <person name="Frangeul L."/>
            <person name="Aigle M."/>
            <person name="Anthouard V."/>
            <person name="Babour A."/>
            <person name="Barbe V."/>
            <person name="Barnay S."/>
            <person name="Blanchin S."/>
            <person name="Beckerich J.-M."/>
            <person name="Beyne E."/>
            <person name="Bleykasten C."/>
            <person name="Boisrame A."/>
            <person name="Boyer J."/>
            <person name="Cattolico L."/>
            <person name="Confanioleri F."/>
            <person name="de Daruvar A."/>
            <person name="Despons L."/>
            <person name="Fabre E."/>
            <person name="Fairhead C."/>
            <person name="Ferry-Dumazet H."/>
            <person name="Groppi A."/>
            <person name="Hantraye F."/>
            <person name="Hennequin C."/>
            <person name="Jauniaux N."/>
            <person name="Joyet P."/>
            <person name="Kachouri R."/>
            <person name="Kerrest A."/>
            <person name="Koszul R."/>
            <person name="Lemaire M."/>
            <person name="Lesur I."/>
            <person name="Ma L."/>
            <person name="Muller H."/>
            <person name="Nicaud J.-M."/>
            <person name="Nikolski M."/>
            <person name="Oztas S."/>
            <person name="Ozier-Kalogeropoulos O."/>
            <person name="Pellenz S."/>
            <person name="Potier S."/>
            <person name="Richard G.-F."/>
            <person name="Straub M.-L."/>
            <person name="Suleau A."/>
            <person name="Swennen D."/>
            <person name="Tekaia F."/>
            <person name="Wesolowski-Louvel M."/>
            <person name="Westhof E."/>
            <person name="Wirth B."/>
            <person name="Zeniou-Meyer M."/>
            <person name="Zivanovic Y."/>
            <person name="Bolotin-Fukuhara M."/>
            <person name="Thierry A."/>
            <person name="Bouchier C."/>
            <person name="Caudron B."/>
            <person name="Scarpelli C."/>
            <person name="Gaillardin C."/>
            <person name="Weissenbach J."/>
            <person name="Wincker P."/>
            <person name="Souciet J.-L."/>
        </authorList>
    </citation>
    <scope>NUCLEOTIDE SEQUENCE [LARGE SCALE GENOMIC DNA]</scope>
    <source>
        <strain>CLIB 122 / E 150</strain>
    </source>
</reference>
<keyword id="KW-0067">ATP-binding</keyword>
<keyword id="KW-0143">Chaperone</keyword>
<keyword id="KW-0963">Cytoplasm</keyword>
<keyword id="KW-0547">Nucleotide-binding</keyword>
<keyword id="KW-1185">Reference proteome</keyword>
<organism>
    <name type="scientific">Yarrowia lipolytica (strain CLIB 122 / E 150)</name>
    <name type="common">Yeast</name>
    <name type="synonym">Candida lipolytica</name>
    <dbReference type="NCBI Taxonomy" id="284591"/>
    <lineage>
        <taxon>Eukaryota</taxon>
        <taxon>Fungi</taxon>
        <taxon>Dikarya</taxon>
        <taxon>Ascomycota</taxon>
        <taxon>Saccharomycotina</taxon>
        <taxon>Dipodascomycetes</taxon>
        <taxon>Dipodascales</taxon>
        <taxon>Dipodascales incertae sedis</taxon>
        <taxon>Yarrowia</taxon>
    </lineage>
</organism>
<name>TCPD_YARLI</name>
<comment type="function">
    <text evidence="1">Molecular chaperone; assists the folding of proteins upon ATP hydrolysis. Known to play a role, in vitro, in the folding of actin and tubulin (By similarity).</text>
</comment>
<comment type="subunit">
    <text evidence="2">Heterooligomeric complex of about 850 to 900 kDa that forms two stacked rings, 12 to 16 nm in diameter.</text>
</comment>
<comment type="subcellular location">
    <subcellularLocation>
        <location evidence="2">Cytoplasm</location>
    </subcellularLocation>
</comment>
<comment type="similarity">
    <text evidence="2">Belongs to the TCP-1 chaperonin family.</text>
</comment>
<proteinExistence type="inferred from homology"/>
<protein>
    <recommendedName>
        <fullName>T-complex protein 1 subunit delta</fullName>
        <shortName>TCP-1-delta</shortName>
    </recommendedName>
    <alternativeName>
        <fullName>CCT-delta</fullName>
    </alternativeName>
</protein>
<evidence type="ECO:0000250" key="1"/>
<evidence type="ECO:0000305" key="2"/>
<sequence length="527" mass="56483">MSVPTGTKSGFKNKEKPLEVRKSNILAARAVADAIRTSLGPKGMDKMIQTARGQVIISNDGNTILQHMAVMHPAAKMLVDLSASQDSVAGDGTTSVVILAGSLLGAADKLLKKGIHPSIIAENFQKAAQRAAEVVMDMSKPIDLSDRETLIRAASTSLNSKIVSQFSSTLAPMLVDAALQAAKKTPEGGLTLDLNDIRIIKSLGGTIEDTTLANGLVLNNYAVKNAGGPSRMEKAKIGLIQFQLSAPKPDMENHIVVNDYRQMDKILKEERQYILGLAKAIKKSKCNVLLIQKSILRDAVSELALHFLAKLNIMVIKDIERDDIEFISRSTGAKPVADIEAFTEDKLGSCDLVEEVESSGSKTVRFSSREGSNTVSILVRGANDLVIDETERSLHDALCVLRSLFRVPALVPGGGACEVQVAQVIGKESRAMDGASAICYEEFSNAMLVIPTTLAENAGLNPVNVVTELRVRHEKGEVNAGISVRRGTSIMVEEHVIQPALVTTSAITLAAECAKGLLRIDDIAFSR</sequence>
<accession>Q6C100</accession>
<feature type="chain" id="PRO_0000128344" description="T-complex protein 1 subunit delta">
    <location>
        <begin position="1"/>
        <end position="527"/>
    </location>
</feature>
<gene>
    <name type="primary">CCT4</name>
    <name type="ordered locus">YALI0F20416g</name>
</gene>